<keyword id="KW-0378">Hydrolase</keyword>
<keyword id="KW-0719">Serine esterase</keyword>
<gene>
    <name evidence="1" type="primary">frsA</name>
    <name type="ordered locus">SeD_A0348</name>
</gene>
<comment type="function">
    <text evidence="1">Catalyzes the hydrolysis of esters.</text>
</comment>
<comment type="catalytic activity">
    <reaction evidence="1">
        <text>a carboxylic ester + H2O = an alcohol + a carboxylate + H(+)</text>
        <dbReference type="Rhea" id="RHEA:21164"/>
        <dbReference type="ChEBI" id="CHEBI:15377"/>
        <dbReference type="ChEBI" id="CHEBI:15378"/>
        <dbReference type="ChEBI" id="CHEBI:29067"/>
        <dbReference type="ChEBI" id="CHEBI:30879"/>
        <dbReference type="ChEBI" id="CHEBI:33308"/>
        <dbReference type="EC" id="3.1.1.1"/>
    </reaction>
</comment>
<comment type="similarity">
    <text evidence="1">Belongs to the FrsA family.</text>
</comment>
<accession>B5FJX0</accession>
<feature type="chain" id="PRO_1000136521" description="Esterase FrsA">
    <location>
        <begin position="1"/>
        <end position="414"/>
    </location>
</feature>
<organism>
    <name type="scientific">Salmonella dublin (strain CT_02021853)</name>
    <dbReference type="NCBI Taxonomy" id="439851"/>
    <lineage>
        <taxon>Bacteria</taxon>
        <taxon>Pseudomonadati</taxon>
        <taxon>Pseudomonadota</taxon>
        <taxon>Gammaproteobacteria</taxon>
        <taxon>Enterobacterales</taxon>
        <taxon>Enterobacteriaceae</taxon>
        <taxon>Salmonella</taxon>
    </lineage>
</organism>
<evidence type="ECO:0000255" key="1">
    <source>
        <dbReference type="HAMAP-Rule" id="MF_01063"/>
    </source>
</evidence>
<reference key="1">
    <citation type="journal article" date="2011" name="J. Bacteriol.">
        <title>Comparative genomics of 28 Salmonella enterica isolates: evidence for CRISPR-mediated adaptive sublineage evolution.</title>
        <authorList>
            <person name="Fricke W.F."/>
            <person name="Mammel M.K."/>
            <person name="McDermott P.F."/>
            <person name="Tartera C."/>
            <person name="White D.G."/>
            <person name="Leclerc J.E."/>
            <person name="Ravel J."/>
            <person name="Cebula T.A."/>
        </authorList>
    </citation>
    <scope>NUCLEOTIDE SEQUENCE [LARGE SCALE GENOMIC DNA]</scope>
    <source>
        <strain>CT_02021853</strain>
    </source>
</reference>
<protein>
    <recommendedName>
        <fullName evidence="1">Esterase FrsA</fullName>
        <ecNumber evidence="1">3.1.1.1</ecNumber>
    </recommendedName>
</protein>
<name>FRSA_SALDC</name>
<sequence>MTQANLSETLFKPRFKHTETSTLVRRFNRGSQPPMQSALDGKNVPHWYRMINRLMWIWRGIDPREILDVQARIVMSDAERTDDDLYDTVIGYRGGNWIYEWAKQAMDWQQKACQEQDAMRSGRYWLHASTLYNIAAYPHLKGDELAEQAQALANRAYEEAAQRLPGSLREMEFAVPGGSPVTAFLHMPKGDGPFPTVLMCGGLDAMQTDYYTLYERYFAPRGIAMLTLDMPSVGFSSKWKLTQDSSLLHQHVLKALPNVPWVDHTRVAAFGFRFGANVAVRLAYLEAPRLKAVACLGPVVHALLSDPQRQSTVPEMYLDVLASRLGMHDASDEALRVELNRYSLKVQGLLGRRCPTPMLSGFWKNDPFSPEEESRLITTSSSDGKLIEIPFNPVYRNFDRALQEITDWINHRLC</sequence>
<proteinExistence type="inferred from homology"/>
<dbReference type="EC" id="3.1.1.1" evidence="1"/>
<dbReference type="EMBL" id="CP001144">
    <property type="protein sequence ID" value="ACH74523.1"/>
    <property type="molecule type" value="Genomic_DNA"/>
</dbReference>
<dbReference type="RefSeq" id="WP_000189582.1">
    <property type="nucleotide sequence ID" value="NC_011205.1"/>
</dbReference>
<dbReference type="SMR" id="B5FJX0"/>
<dbReference type="ESTHER" id="salty-yafa">
    <property type="family name" value="Duf_1100-R"/>
</dbReference>
<dbReference type="KEGG" id="sed:SeD_A0348"/>
<dbReference type="HOGENOM" id="CLU_036819_0_0_6"/>
<dbReference type="Proteomes" id="UP000008322">
    <property type="component" value="Chromosome"/>
</dbReference>
<dbReference type="GO" id="GO:0106435">
    <property type="term" value="F:carboxylesterase activity"/>
    <property type="evidence" value="ECO:0007669"/>
    <property type="project" value="UniProtKB-EC"/>
</dbReference>
<dbReference type="FunFam" id="3.40.50.1820:FF:000022">
    <property type="entry name" value="Esterase FrsA"/>
    <property type="match status" value="1"/>
</dbReference>
<dbReference type="Gene3D" id="3.40.50.1820">
    <property type="entry name" value="alpha/beta hydrolase"/>
    <property type="match status" value="1"/>
</dbReference>
<dbReference type="HAMAP" id="MF_01063">
    <property type="entry name" value="FrsA"/>
    <property type="match status" value="1"/>
</dbReference>
<dbReference type="InterPro" id="IPR029058">
    <property type="entry name" value="AB_hydrolase_fold"/>
</dbReference>
<dbReference type="InterPro" id="IPR043423">
    <property type="entry name" value="FrsA"/>
</dbReference>
<dbReference type="InterPro" id="IPR010520">
    <property type="entry name" value="FrsA-like"/>
</dbReference>
<dbReference type="InterPro" id="IPR050261">
    <property type="entry name" value="FrsA_esterase"/>
</dbReference>
<dbReference type="NCBIfam" id="NF003460">
    <property type="entry name" value="PRK05077.1"/>
    <property type="match status" value="1"/>
</dbReference>
<dbReference type="PANTHER" id="PTHR22946">
    <property type="entry name" value="DIENELACTONE HYDROLASE DOMAIN-CONTAINING PROTEIN-RELATED"/>
    <property type="match status" value="1"/>
</dbReference>
<dbReference type="PANTHER" id="PTHR22946:SF4">
    <property type="entry name" value="ESTERASE FRSA"/>
    <property type="match status" value="1"/>
</dbReference>
<dbReference type="Pfam" id="PF06500">
    <property type="entry name" value="FrsA-like"/>
    <property type="match status" value="1"/>
</dbReference>
<dbReference type="SUPFAM" id="SSF53474">
    <property type="entry name" value="alpha/beta-Hydrolases"/>
    <property type="match status" value="1"/>
</dbReference>